<organism>
    <name type="scientific">Synechococcus elongatus (strain ATCC 33912 / PCC 7942 / FACHB-805)</name>
    <name type="common">Anacystis nidulans R2</name>
    <dbReference type="NCBI Taxonomy" id="1140"/>
    <lineage>
        <taxon>Bacteria</taxon>
        <taxon>Bacillati</taxon>
        <taxon>Cyanobacteriota</taxon>
        <taxon>Cyanophyceae</taxon>
        <taxon>Synechococcales</taxon>
        <taxon>Synechococcaceae</taxon>
        <taxon>Synechococcus</taxon>
    </lineage>
</organism>
<feature type="chain" id="PRO_1000010470" description="Heat-inducible transcription repressor HrcA">
    <location>
        <begin position="1"/>
        <end position="353"/>
    </location>
</feature>
<name>HRCA_SYNE7</name>
<comment type="function">
    <text evidence="1">Negative regulator of class I heat shock genes (grpE-dnaK-dnaJ and groELS operons). Prevents heat-shock induction of these operons.</text>
</comment>
<comment type="similarity">
    <text evidence="1">Belongs to the HrcA family.</text>
</comment>
<evidence type="ECO:0000255" key="1">
    <source>
        <dbReference type="HAMAP-Rule" id="MF_00081"/>
    </source>
</evidence>
<reference key="1">
    <citation type="submission" date="2005-08" db="EMBL/GenBank/DDBJ databases">
        <title>Complete sequence of chromosome 1 of Synechococcus elongatus PCC 7942.</title>
        <authorList>
            <consortium name="US DOE Joint Genome Institute"/>
            <person name="Copeland A."/>
            <person name="Lucas S."/>
            <person name="Lapidus A."/>
            <person name="Barry K."/>
            <person name="Detter J.C."/>
            <person name="Glavina T."/>
            <person name="Hammon N."/>
            <person name="Israni S."/>
            <person name="Pitluck S."/>
            <person name="Schmutz J."/>
            <person name="Larimer F."/>
            <person name="Land M."/>
            <person name="Kyrpides N."/>
            <person name="Lykidis A."/>
            <person name="Golden S."/>
            <person name="Richardson P."/>
        </authorList>
    </citation>
    <scope>NUCLEOTIDE SEQUENCE [LARGE SCALE GENOMIC DNA]</scope>
    <source>
        <strain>ATCC 33912 / PCC 7942 / FACHB-805</strain>
    </source>
</reference>
<dbReference type="EMBL" id="CP000100">
    <property type="protein sequence ID" value="ABB56648.1"/>
    <property type="molecule type" value="Genomic_DNA"/>
</dbReference>
<dbReference type="RefSeq" id="WP_011243220.1">
    <property type="nucleotide sequence ID" value="NZ_JACJTX010000006.1"/>
</dbReference>
<dbReference type="SMR" id="Q31QM1"/>
<dbReference type="STRING" id="1140.Synpcc7942_0616"/>
<dbReference type="PaxDb" id="1140-Synpcc7942_0616"/>
<dbReference type="GeneID" id="72429448"/>
<dbReference type="KEGG" id="syf:Synpcc7942_0616"/>
<dbReference type="eggNOG" id="COG1420">
    <property type="taxonomic scope" value="Bacteria"/>
</dbReference>
<dbReference type="HOGENOM" id="CLU_050019_2_0_3"/>
<dbReference type="OrthoDB" id="9783139at2"/>
<dbReference type="BioCyc" id="SYNEL:SYNPCC7942_0616-MONOMER"/>
<dbReference type="Proteomes" id="UP000889800">
    <property type="component" value="Chromosome"/>
</dbReference>
<dbReference type="GO" id="GO:0003677">
    <property type="term" value="F:DNA binding"/>
    <property type="evidence" value="ECO:0007669"/>
    <property type="project" value="InterPro"/>
</dbReference>
<dbReference type="GO" id="GO:0045892">
    <property type="term" value="P:negative regulation of DNA-templated transcription"/>
    <property type="evidence" value="ECO:0007669"/>
    <property type="project" value="UniProtKB-UniRule"/>
</dbReference>
<dbReference type="Gene3D" id="3.30.450.40">
    <property type="match status" value="1"/>
</dbReference>
<dbReference type="Gene3D" id="3.30.390.60">
    <property type="entry name" value="Heat-inducible transcription repressor hrca homolog, domain 3"/>
    <property type="match status" value="1"/>
</dbReference>
<dbReference type="Gene3D" id="1.10.10.10">
    <property type="entry name" value="Winged helix-like DNA-binding domain superfamily/Winged helix DNA-binding domain"/>
    <property type="match status" value="1"/>
</dbReference>
<dbReference type="HAMAP" id="MF_00081">
    <property type="entry name" value="HrcA"/>
    <property type="match status" value="1"/>
</dbReference>
<dbReference type="InterPro" id="IPR029016">
    <property type="entry name" value="GAF-like_dom_sf"/>
</dbReference>
<dbReference type="InterPro" id="IPR002571">
    <property type="entry name" value="HrcA"/>
</dbReference>
<dbReference type="InterPro" id="IPR021153">
    <property type="entry name" value="HrcA_C"/>
</dbReference>
<dbReference type="InterPro" id="IPR036388">
    <property type="entry name" value="WH-like_DNA-bd_sf"/>
</dbReference>
<dbReference type="InterPro" id="IPR036390">
    <property type="entry name" value="WH_DNA-bd_sf"/>
</dbReference>
<dbReference type="InterPro" id="IPR023120">
    <property type="entry name" value="WHTH_transcript_rep_HrcA_IDD"/>
</dbReference>
<dbReference type="NCBIfam" id="TIGR00331">
    <property type="entry name" value="hrcA"/>
    <property type="match status" value="1"/>
</dbReference>
<dbReference type="PANTHER" id="PTHR34824">
    <property type="entry name" value="HEAT-INDUCIBLE TRANSCRIPTION REPRESSOR HRCA"/>
    <property type="match status" value="1"/>
</dbReference>
<dbReference type="PANTHER" id="PTHR34824:SF1">
    <property type="entry name" value="HEAT-INDUCIBLE TRANSCRIPTION REPRESSOR HRCA"/>
    <property type="match status" value="1"/>
</dbReference>
<dbReference type="Pfam" id="PF01628">
    <property type="entry name" value="HrcA"/>
    <property type="match status" value="1"/>
</dbReference>
<dbReference type="PIRSF" id="PIRSF005485">
    <property type="entry name" value="HrcA"/>
    <property type="match status" value="1"/>
</dbReference>
<dbReference type="SUPFAM" id="SSF55781">
    <property type="entry name" value="GAF domain-like"/>
    <property type="match status" value="1"/>
</dbReference>
<dbReference type="SUPFAM" id="SSF46785">
    <property type="entry name" value="Winged helix' DNA-binding domain"/>
    <property type="match status" value="1"/>
</dbReference>
<accession>Q31QM1</accession>
<gene>
    <name evidence="1" type="primary">hrcA</name>
    <name type="ordered locus">Synpcc7942_0616</name>
</gene>
<keyword id="KW-1185">Reference proteome</keyword>
<keyword id="KW-0678">Repressor</keyword>
<keyword id="KW-0346">Stress response</keyword>
<keyword id="KW-0804">Transcription</keyword>
<keyword id="KW-0805">Transcription regulation</keyword>
<proteinExistence type="inferred from homology"/>
<protein>
    <recommendedName>
        <fullName evidence="1">Heat-inducible transcription repressor HrcA</fullName>
    </recommendedName>
</protein>
<sequence length="353" mass="38806">MLVSRLTARQQTILSATVRHYVRTAEPVGSKALAEQYGLSVSAATIRNAMGVLERAGLLYQPHTSAGRVPSEGGYRLYVDQLMEPDRALQRQTEQQLSQQLPDRRQSLEALLRGAAQILASLSGYLSLITFPLGLEFQVRHLQLVAIAPHQVLLIVVNDSYETQSALLTLPELDRDLEADQLDRQLLLLSNFLNQELQGRSLQALANLDWPVLGSELQSLAGILQQGLQDLEKRWQPTPATSLLVCGLADLLRQPEFNELQQVQALLELLEGEQTQLLPLMLADPAADQVRVRIGSELPLAPIRSCSLVSAFYCREQQPVGSVSLIGPTRMLYENAVAAVEATASYLSEAIAS</sequence>